<gene>
    <name type="primary">ywkD</name>
    <name type="ordered locus">BSU37020</name>
</gene>
<keyword id="KW-0479">Metal-binding</keyword>
<keyword id="KW-1185">Reference proteome</keyword>
<reference key="1">
    <citation type="journal article" date="1997" name="Microbiology">
        <title>The Bacillus subtilis genome from gerBC (311 degrees) to licR (334 degrees).</title>
        <authorList>
            <person name="Presecan E."/>
            <person name="Moszer I."/>
            <person name="Boursier L."/>
            <person name="Cruz Ramos H."/>
            <person name="De La Fuente V."/>
            <person name="Hullo M.-F."/>
            <person name="Lelong C."/>
            <person name="Schleich S."/>
            <person name="Sekowska A."/>
            <person name="Song B.H."/>
            <person name="Villani G."/>
            <person name="Kunst F."/>
            <person name="Danchin A."/>
            <person name="Glaser P."/>
        </authorList>
    </citation>
    <scope>NUCLEOTIDE SEQUENCE [GENOMIC DNA]</scope>
    <source>
        <strain>168</strain>
    </source>
</reference>
<reference key="2">
    <citation type="journal article" date="1997" name="Nature">
        <title>The complete genome sequence of the Gram-positive bacterium Bacillus subtilis.</title>
        <authorList>
            <person name="Kunst F."/>
            <person name="Ogasawara N."/>
            <person name="Moszer I."/>
            <person name="Albertini A.M."/>
            <person name="Alloni G."/>
            <person name="Azevedo V."/>
            <person name="Bertero M.G."/>
            <person name="Bessieres P."/>
            <person name="Bolotin A."/>
            <person name="Borchert S."/>
            <person name="Borriss R."/>
            <person name="Boursier L."/>
            <person name="Brans A."/>
            <person name="Braun M."/>
            <person name="Brignell S.C."/>
            <person name="Bron S."/>
            <person name="Brouillet S."/>
            <person name="Bruschi C.V."/>
            <person name="Caldwell B."/>
            <person name="Capuano V."/>
            <person name="Carter N.M."/>
            <person name="Choi S.-K."/>
            <person name="Codani J.-J."/>
            <person name="Connerton I.F."/>
            <person name="Cummings N.J."/>
            <person name="Daniel R.A."/>
            <person name="Denizot F."/>
            <person name="Devine K.M."/>
            <person name="Duesterhoeft A."/>
            <person name="Ehrlich S.D."/>
            <person name="Emmerson P.T."/>
            <person name="Entian K.-D."/>
            <person name="Errington J."/>
            <person name="Fabret C."/>
            <person name="Ferrari E."/>
            <person name="Foulger D."/>
            <person name="Fritz C."/>
            <person name="Fujita M."/>
            <person name="Fujita Y."/>
            <person name="Fuma S."/>
            <person name="Galizzi A."/>
            <person name="Galleron N."/>
            <person name="Ghim S.-Y."/>
            <person name="Glaser P."/>
            <person name="Goffeau A."/>
            <person name="Golightly E.J."/>
            <person name="Grandi G."/>
            <person name="Guiseppi G."/>
            <person name="Guy B.J."/>
            <person name="Haga K."/>
            <person name="Haiech J."/>
            <person name="Harwood C.R."/>
            <person name="Henaut A."/>
            <person name="Hilbert H."/>
            <person name="Holsappel S."/>
            <person name="Hosono S."/>
            <person name="Hullo M.-F."/>
            <person name="Itaya M."/>
            <person name="Jones L.-M."/>
            <person name="Joris B."/>
            <person name="Karamata D."/>
            <person name="Kasahara Y."/>
            <person name="Klaerr-Blanchard M."/>
            <person name="Klein C."/>
            <person name="Kobayashi Y."/>
            <person name="Koetter P."/>
            <person name="Koningstein G."/>
            <person name="Krogh S."/>
            <person name="Kumano M."/>
            <person name="Kurita K."/>
            <person name="Lapidus A."/>
            <person name="Lardinois S."/>
            <person name="Lauber J."/>
            <person name="Lazarevic V."/>
            <person name="Lee S.-M."/>
            <person name="Levine A."/>
            <person name="Liu H."/>
            <person name="Masuda S."/>
            <person name="Mauel C."/>
            <person name="Medigue C."/>
            <person name="Medina N."/>
            <person name="Mellado R.P."/>
            <person name="Mizuno M."/>
            <person name="Moestl D."/>
            <person name="Nakai S."/>
            <person name="Noback M."/>
            <person name="Noone D."/>
            <person name="O'Reilly M."/>
            <person name="Ogawa K."/>
            <person name="Ogiwara A."/>
            <person name="Oudega B."/>
            <person name="Park S.-H."/>
            <person name="Parro V."/>
            <person name="Pohl T.M."/>
            <person name="Portetelle D."/>
            <person name="Porwollik S."/>
            <person name="Prescott A.M."/>
            <person name="Presecan E."/>
            <person name="Pujic P."/>
            <person name="Purnelle B."/>
            <person name="Rapoport G."/>
            <person name="Rey M."/>
            <person name="Reynolds S."/>
            <person name="Rieger M."/>
            <person name="Rivolta C."/>
            <person name="Rocha E."/>
            <person name="Roche B."/>
            <person name="Rose M."/>
            <person name="Sadaie Y."/>
            <person name="Sato T."/>
            <person name="Scanlan E."/>
            <person name="Schleich S."/>
            <person name="Schroeter R."/>
            <person name="Scoffone F."/>
            <person name="Sekiguchi J."/>
            <person name="Sekowska A."/>
            <person name="Seror S.J."/>
            <person name="Serror P."/>
            <person name="Shin B.-S."/>
            <person name="Soldo B."/>
            <person name="Sorokin A."/>
            <person name="Tacconi E."/>
            <person name="Takagi T."/>
            <person name="Takahashi H."/>
            <person name="Takemaru K."/>
            <person name="Takeuchi M."/>
            <person name="Tamakoshi A."/>
            <person name="Tanaka T."/>
            <person name="Terpstra P."/>
            <person name="Tognoni A."/>
            <person name="Tosato V."/>
            <person name="Uchiyama S."/>
            <person name="Vandenbol M."/>
            <person name="Vannier F."/>
            <person name="Vassarotti A."/>
            <person name="Viari A."/>
            <person name="Wambutt R."/>
            <person name="Wedler E."/>
            <person name="Wedler H."/>
            <person name="Weitzenegger T."/>
            <person name="Winters P."/>
            <person name="Wipat A."/>
            <person name="Yamamoto H."/>
            <person name="Yamane K."/>
            <person name="Yasumoto K."/>
            <person name="Yata K."/>
            <person name="Yoshida K."/>
            <person name="Yoshikawa H.-F."/>
            <person name="Zumstein E."/>
            <person name="Yoshikawa H."/>
            <person name="Danchin A."/>
        </authorList>
    </citation>
    <scope>NUCLEOTIDE SEQUENCE [LARGE SCALE GENOMIC DNA]</scope>
    <source>
        <strain>168</strain>
    </source>
</reference>
<proteinExistence type="predicted"/>
<evidence type="ECO:0000255" key="1">
    <source>
        <dbReference type="PROSITE-ProRule" id="PRU01163"/>
    </source>
</evidence>
<dbReference type="EMBL" id="Z49782">
    <property type="protein sequence ID" value="CAA89883.1"/>
    <property type="molecule type" value="Genomic_DNA"/>
</dbReference>
<dbReference type="EMBL" id="AL009126">
    <property type="protein sequence ID" value="CAB15719.1"/>
    <property type="molecule type" value="Genomic_DNA"/>
</dbReference>
<dbReference type="PIR" id="S55436">
    <property type="entry name" value="S55436"/>
</dbReference>
<dbReference type="RefSeq" id="NP_391583.1">
    <property type="nucleotide sequence ID" value="NC_000964.3"/>
</dbReference>
<dbReference type="RefSeq" id="WP_003227644.1">
    <property type="nucleotide sequence ID" value="NZ_OZ025638.1"/>
</dbReference>
<dbReference type="SMR" id="P45871"/>
<dbReference type="FunCoup" id="P45871">
    <property type="interactions" value="263"/>
</dbReference>
<dbReference type="STRING" id="224308.BSU37020"/>
<dbReference type="PaxDb" id="224308-BSU37020"/>
<dbReference type="EnsemblBacteria" id="CAB15719">
    <property type="protein sequence ID" value="CAB15719"/>
    <property type="gene ID" value="BSU_37020"/>
</dbReference>
<dbReference type="GeneID" id="937039"/>
<dbReference type="KEGG" id="bsu:BSU37020"/>
<dbReference type="PATRIC" id="fig|224308.43.peg.3881"/>
<dbReference type="eggNOG" id="COG0346">
    <property type="taxonomic scope" value="Bacteria"/>
</dbReference>
<dbReference type="InParanoid" id="P45871"/>
<dbReference type="OrthoDB" id="9795618at2"/>
<dbReference type="PhylomeDB" id="P45871"/>
<dbReference type="BioCyc" id="BSUB:BSU37020-MONOMER"/>
<dbReference type="Proteomes" id="UP000001570">
    <property type="component" value="Chromosome"/>
</dbReference>
<dbReference type="GO" id="GO:0046872">
    <property type="term" value="F:metal ion binding"/>
    <property type="evidence" value="ECO:0007669"/>
    <property type="project" value="UniProtKB-KW"/>
</dbReference>
<dbReference type="CDD" id="cd08352">
    <property type="entry name" value="VOC_Bs_YwkD_like"/>
    <property type="match status" value="1"/>
</dbReference>
<dbReference type="Gene3D" id="3.10.180.10">
    <property type="entry name" value="2,3-Dihydroxybiphenyl 1,2-Dioxygenase, domain 1"/>
    <property type="match status" value="1"/>
</dbReference>
<dbReference type="InterPro" id="IPR051332">
    <property type="entry name" value="Fosfomycin_Res_Enzymes"/>
</dbReference>
<dbReference type="InterPro" id="IPR029068">
    <property type="entry name" value="Glyas_Bleomycin-R_OHBP_Dase"/>
</dbReference>
<dbReference type="InterPro" id="IPR004360">
    <property type="entry name" value="Glyas_Fos-R_dOase_dom"/>
</dbReference>
<dbReference type="InterPro" id="IPR037523">
    <property type="entry name" value="VOC"/>
</dbReference>
<dbReference type="InterPro" id="IPR037478">
    <property type="entry name" value="YwkD-like_dom"/>
</dbReference>
<dbReference type="NCBIfam" id="NF008551">
    <property type="entry name" value="PRK11478.1"/>
    <property type="match status" value="1"/>
</dbReference>
<dbReference type="PANTHER" id="PTHR36113:SF6">
    <property type="entry name" value="FOSFOMYCIN RESISTANCE PROTEIN FOSX"/>
    <property type="match status" value="1"/>
</dbReference>
<dbReference type="PANTHER" id="PTHR36113">
    <property type="entry name" value="LYASE, PUTATIVE-RELATED-RELATED"/>
    <property type="match status" value="1"/>
</dbReference>
<dbReference type="Pfam" id="PF00903">
    <property type="entry name" value="Glyoxalase"/>
    <property type="match status" value="1"/>
</dbReference>
<dbReference type="SUPFAM" id="SSF54593">
    <property type="entry name" value="Glyoxalase/Bleomycin resistance protein/Dihydroxybiphenyl dioxygenase"/>
    <property type="match status" value="1"/>
</dbReference>
<dbReference type="PROSITE" id="PS51819">
    <property type="entry name" value="VOC"/>
    <property type="match status" value="1"/>
</dbReference>
<organism>
    <name type="scientific">Bacillus subtilis (strain 168)</name>
    <dbReference type="NCBI Taxonomy" id="224308"/>
    <lineage>
        <taxon>Bacteria</taxon>
        <taxon>Bacillati</taxon>
        <taxon>Bacillota</taxon>
        <taxon>Bacilli</taxon>
        <taxon>Bacillales</taxon>
        <taxon>Bacillaceae</taxon>
        <taxon>Bacillus</taxon>
    </lineage>
</organism>
<accession>P45871</accession>
<protein>
    <recommendedName>
        <fullName>Uncharacterized protein YwkD</fullName>
    </recommendedName>
</protein>
<name>YWKD_BACSU</name>
<feature type="chain" id="PRO_0000049980" description="Uncharacterized protein YwkD">
    <location>
        <begin position="1"/>
        <end position="128"/>
    </location>
</feature>
<feature type="domain" description="VOC" evidence="1">
    <location>
        <begin position="5"/>
        <end position="128"/>
    </location>
</feature>
<feature type="binding site" evidence="1">
    <location>
        <position position="8"/>
    </location>
    <ligand>
        <name>a divalent metal cation</name>
        <dbReference type="ChEBI" id="CHEBI:60240"/>
    </ligand>
</feature>
<feature type="binding site" evidence="1">
    <location>
        <position position="56"/>
    </location>
    <ligand>
        <name>a divalent metal cation</name>
        <dbReference type="ChEBI" id="CHEBI:60240"/>
    </ligand>
</feature>
<feature type="binding site" evidence="1">
    <location>
        <position position="77"/>
    </location>
    <ligand>
        <name>a divalent metal cation</name>
        <dbReference type="ChEBI" id="CHEBI:60240"/>
    </ligand>
</feature>
<feature type="binding site" evidence="1">
    <location>
        <position position="124"/>
    </location>
    <ligand>
        <name>a divalent metal cation</name>
        <dbReference type="ChEBI" id="CHEBI:60240"/>
    </ligand>
</feature>
<sequence>MLLKSIHHIAIICSDYEKSKAFYVHKLGFQVIQETYREERGSYKLDLSLNGSYVIELFSFPDPPERQTRPEAAGLRHLAFTVGSLDKAVQELHEKGIETEPIRTDPLTGKRFTFFFDPDQLPLELYEQ</sequence>